<feature type="chain" id="PRO_0000355534" description="Ribonucleoside-diphosphate reductase small chain">
    <location>
        <begin position="1"/>
        <end position="327"/>
    </location>
</feature>
<feature type="active site" evidence="2">
    <location>
        <position position="108"/>
    </location>
</feature>
<feature type="binding site" evidence="2">
    <location>
        <position position="70"/>
    </location>
    <ligand>
        <name>Fe cation</name>
        <dbReference type="ChEBI" id="CHEBI:24875"/>
        <label>1</label>
    </ligand>
</feature>
<feature type="binding site" evidence="2">
    <location>
        <position position="101"/>
    </location>
    <ligand>
        <name>Fe cation</name>
        <dbReference type="ChEBI" id="CHEBI:24875"/>
        <label>1</label>
    </ligand>
</feature>
<feature type="binding site" evidence="1">
    <location>
        <position position="101"/>
    </location>
    <ligand>
        <name>Fe cation</name>
        <dbReference type="ChEBI" id="CHEBI:24875"/>
        <label>2</label>
    </ligand>
</feature>
<feature type="binding site" evidence="2">
    <location>
        <position position="104"/>
    </location>
    <ligand>
        <name>Fe cation</name>
        <dbReference type="ChEBI" id="CHEBI:24875"/>
        <label>1</label>
    </ligand>
</feature>
<feature type="binding site" evidence="1">
    <location>
        <position position="164"/>
    </location>
    <ligand>
        <name>Fe cation</name>
        <dbReference type="ChEBI" id="CHEBI:24875"/>
        <label>2</label>
    </ligand>
</feature>
<feature type="binding site" evidence="1">
    <location>
        <position position="198"/>
    </location>
    <ligand>
        <name>Fe cation</name>
        <dbReference type="ChEBI" id="CHEBI:24875"/>
        <label>2</label>
    </ligand>
</feature>
<feature type="binding site" evidence="1">
    <location>
        <position position="201"/>
    </location>
    <ligand>
        <name>Fe cation</name>
        <dbReference type="ChEBI" id="CHEBI:24875"/>
        <label>2</label>
    </ligand>
</feature>
<reference key="1">
    <citation type="submission" date="2003-03" db="EMBL/GenBank/DDBJ databases">
        <title>African swine fever virus genomes.</title>
        <authorList>
            <person name="Kutish G.F."/>
            <person name="Rock D.L."/>
        </authorList>
    </citation>
    <scope>NUCLEOTIDE SEQUENCE [LARGE SCALE GENOMIC DNA]</scope>
</reference>
<accession>P0C8I2</accession>
<dbReference type="EC" id="1.17.4.1"/>
<dbReference type="EMBL" id="AY261366">
    <property type="status" value="NOT_ANNOTATED_CDS"/>
    <property type="molecule type" value="Genomic_DNA"/>
</dbReference>
<dbReference type="SMR" id="P0C8I2"/>
<dbReference type="Proteomes" id="UP000000858">
    <property type="component" value="Segment"/>
</dbReference>
<dbReference type="GO" id="GO:0046872">
    <property type="term" value="F:metal ion binding"/>
    <property type="evidence" value="ECO:0007669"/>
    <property type="project" value="UniProtKB-KW"/>
</dbReference>
<dbReference type="GO" id="GO:0004748">
    <property type="term" value="F:ribonucleoside-diphosphate reductase activity, thioredoxin disulfide as acceptor"/>
    <property type="evidence" value="ECO:0007669"/>
    <property type="project" value="UniProtKB-EC"/>
</dbReference>
<dbReference type="GO" id="GO:0009263">
    <property type="term" value="P:deoxyribonucleotide biosynthetic process"/>
    <property type="evidence" value="ECO:0007669"/>
    <property type="project" value="UniProtKB-KW"/>
</dbReference>
<dbReference type="CDD" id="cd01049">
    <property type="entry name" value="RNRR2"/>
    <property type="match status" value="1"/>
</dbReference>
<dbReference type="Gene3D" id="1.10.620.20">
    <property type="entry name" value="Ribonucleotide Reductase, subunit A"/>
    <property type="match status" value="1"/>
</dbReference>
<dbReference type="InterPro" id="IPR009078">
    <property type="entry name" value="Ferritin-like_SF"/>
</dbReference>
<dbReference type="InterPro" id="IPR012348">
    <property type="entry name" value="RNR-like"/>
</dbReference>
<dbReference type="InterPro" id="IPR033909">
    <property type="entry name" value="RNR_small"/>
</dbReference>
<dbReference type="InterPro" id="IPR030475">
    <property type="entry name" value="RNR_small_AS"/>
</dbReference>
<dbReference type="InterPro" id="IPR000358">
    <property type="entry name" value="RNR_small_fam"/>
</dbReference>
<dbReference type="PANTHER" id="PTHR23409">
    <property type="entry name" value="RIBONUCLEOSIDE-DIPHOSPHATE REDUCTASE SMALL CHAIN"/>
    <property type="match status" value="1"/>
</dbReference>
<dbReference type="PANTHER" id="PTHR23409:SF18">
    <property type="entry name" value="RIBONUCLEOSIDE-DIPHOSPHATE REDUCTASE SUBUNIT M2"/>
    <property type="match status" value="1"/>
</dbReference>
<dbReference type="Pfam" id="PF00268">
    <property type="entry name" value="Ribonuc_red_sm"/>
    <property type="match status" value="1"/>
</dbReference>
<dbReference type="SUPFAM" id="SSF47240">
    <property type="entry name" value="Ferritin-like"/>
    <property type="match status" value="1"/>
</dbReference>
<dbReference type="PROSITE" id="PS00368">
    <property type="entry name" value="RIBORED_SMALL"/>
    <property type="match status" value="1"/>
</dbReference>
<protein>
    <recommendedName>
        <fullName>Ribonucleoside-diphosphate reductase small chain</fullName>
        <ecNumber>1.17.4.1</ecNumber>
    </recommendedName>
    <alternativeName>
        <fullName>Ribonucleotide reductase small subunit</fullName>
    </alternativeName>
</protein>
<sequence length="327" mass="38904">MEELLIENSQRFTIFPIQHPECWNWYKKLESLTWTAQEVDMCKDIDDWEAMPKPQREFYKQILAFFVVADEIVIENLLTNFMREIKVKEVLYFYTMQAAQECVHSEAYSIQVKTLIPDEKEQQRIFSGIEKHPIIKKMAQWVRQWMDPTKNSLGERLVGFAAVEGILFQNHFVAIQFLKEQNIMPGLVSYNEFISRDEGVHCSFACFLISNYVYNIPEEKIIHKILKEAVELVDEFISYAFDKARGRVPGFSKEMLFQYIRYFTDNLCFMMQCKSIYKVGNPFPQMTKFFLNEVEKTNFFELRPTQYQNCVKDDAFAFKLFLNDDDF</sequence>
<comment type="function">
    <text evidence="1">Ribonucleoside-diphosphate reductase holoenzyme provides the precursors necessary for viral DNA synthesis. Allows virus growth in non-dividing cells. Catalyzes the biosynthesis of deoxyribonucleotides from the corresponding ribonucleotides (By similarity).</text>
</comment>
<comment type="catalytic activity">
    <reaction evidence="2">
        <text>a 2'-deoxyribonucleoside 5'-diphosphate + [thioredoxin]-disulfide + H2O = a ribonucleoside 5'-diphosphate + [thioredoxin]-dithiol</text>
        <dbReference type="Rhea" id="RHEA:23252"/>
        <dbReference type="Rhea" id="RHEA-COMP:10698"/>
        <dbReference type="Rhea" id="RHEA-COMP:10700"/>
        <dbReference type="ChEBI" id="CHEBI:15377"/>
        <dbReference type="ChEBI" id="CHEBI:29950"/>
        <dbReference type="ChEBI" id="CHEBI:50058"/>
        <dbReference type="ChEBI" id="CHEBI:57930"/>
        <dbReference type="ChEBI" id="CHEBI:73316"/>
        <dbReference type="EC" id="1.17.4.1"/>
    </reaction>
</comment>
<comment type="cofactor">
    <cofactor evidence="1">
        <name>Fe cation</name>
        <dbReference type="ChEBI" id="CHEBI:24875"/>
    </cofactor>
    <text evidence="1">Binds 2 iron ions per subunit.</text>
</comment>
<comment type="subunit">
    <text evidence="1">Heterotetramer composed of a homodimer of the large subunit (R1) and a homodimer of the small subunit (R2). Larger multisubunit protein complex are also active, composed of (R1)n(R2)n (By similarity).</text>
</comment>
<comment type="induction">
    <text evidence="3">Expressed in the early phase of the viral replicative cycle.</text>
</comment>
<comment type="similarity">
    <text evidence="3">Belongs to the ribonucleoside diphosphate reductase small chain family.</text>
</comment>
<proteinExistence type="inferred from homology"/>
<keyword id="KW-0215">Deoxyribonucleotide synthesis</keyword>
<keyword id="KW-0244">Early protein</keyword>
<keyword id="KW-0408">Iron</keyword>
<keyword id="KW-0479">Metal-binding</keyword>
<keyword id="KW-0560">Oxidoreductase</keyword>
<gene>
    <name type="ordered locus">War-054</name>
</gene>
<name>RIR2_ASFWA</name>
<evidence type="ECO:0000250" key="1"/>
<evidence type="ECO:0000255" key="2">
    <source>
        <dbReference type="PROSITE-ProRule" id="PRU10014"/>
    </source>
</evidence>
<evidence type="ECO:0000305" key="3"/>
<organismHost>
    <name type="scientific">Ornithodoros</name>
    <name type="common">relapsing fever ticks</name>
    <dbReference type="NCBI Taxonomy" id="6937"/>
</organismHost>
<organismHost>
    <name type="scientific">Phacochoerus aethiopicus</name>
    <name type="common">Warthog</name>
    <dbReference type="NCBI Taxonomy" id="85517"/>
</organismHost>
<organismHost>
    <name type="scientific">Phacochoerus africanus</name>
    <name type="common">Warthog</name>
    <dbReference type="NCBI Taxonomy" id="41426"/>
</organismHost>
<organismHost>
    <name type="scientific">Potamochoerus larvatus</name>
    <name type="common">Bushpig</name>
    <dbReference type="NCBI Taxonomy" id="273792"/>
</organismHost>
<organismHost>
    <name type="scientific">Sus scrofa</name>
    <name type="common">Pig</name>
    <dbReference type="NCBI Taxonomy" id="9823"/>
</organismHost>
<organism>
    <name type="scientific">African swine fever virus (isolate Warthog/Namibia/Wart80/1980)</name>
    <name type="common">ASFV</name>
    <dbReference type="NCBI Taxonomy" id="561444"/>
    <lineage>
        <taxon>Viruses</taxon>
        <taxon>Varidnaviria</taxon>
        <taxon>Bamfordvirae</taxon>
        <taxon>Nucleocytoviricota</taxon>
        <taxon>Pokkesviricetes</taxon>
        <taxon>Asfuvirales</taxon>
        <taxon>Asfarviridae</taxon>
        <taxon>Asfivirus</taxon>
        <taxon>African swine fever virus</taxon>
    </lineage>
</organism>